<reference key="1">
    <citation type="journal article" date="2006" name="Proc. Natl. Acad. Sci. U.S.A.">
        <title>Comparative genomics of the lactic acid bacteria.</title>
        <authorList>
            <person name="Makarova K.S."/>
            <person name="Slesarev A."/>
            <person name="Wolf Y.I."/>
            <person name="Sorokin A."/>
            <person name="Mirkin B."/>
            <person name="Koonin E.V."/>
            <person name="Pavlov A."/>
            <person name="Pavlova N."/>
            <person name="Karamychev V."/>
            <person name="Polouchine N."/>
            <person name="Shakhova V."/>
            <person name="Grigoriev I."/>
            <person name="Lou Y."/>
            <person name="Rohksar D."/>
            <person name="Lucas S."/>
            <person name="Huang K."/>
            <person name="Goodstein D.M."/>
            <person name="Hawkins T."/>
            <person name="Plengvidhya V."/>
            <person name="Welker D."/>
            <person name="Hughes J."/>
            <person name="Goh Y."/>
            <person name="Benson A."/>
            <person name="Baldwin K."/>
            <person name="Lee J.-H."/>
            <person name="Diaz-Muniz I."/>
            <person name="Dosti B."/>
            <person name="Smeianov V."/>
            <person name="Wechter W."/>
            <person name="Barabote R."/>
            <person name="Lorca G."/>
            <person name="Altermann E."/>
            <person name="Barrangou R."/>
            <person name="Ganesan B."/>
            <person name="Xie Y."/>
            <person name="Rawsthorne H."/>
            <person name="Tamir D."/>
            <person name="Parker C."/>
            <person name="Breidt F."/>
            <person name="Broadbent J.R."/>
            <person name="Hutkins R."/>
            <person name="O'Sullivan D."/>
            <person name="Steele J."/>
            <person name="Unlu G."/>
            <person name="Saier M.H. Jr."/>
            <person name="Klaenhammer T."/>
            <person name="Richardson P."/>
            <person name="Kozyavkin S."/>
            <person name="Weimer B.C."/>
            <person name="Mills D.A."/>
        </authorList>
    </citation>
    <scope>NUCLEOTIDE SEQUENCE [LARGE SCALE GENOMIC DNA]</scope>
    <source>
        <strain>ATCC BAA-365 / Lb-18</strain>
    </source>
</reference>
<feature type="chain" id="PRO_0000334019" description="Cell division protein SepF">
    <location>
        <begin position="1"/>
        <end position="148"/>
    </location>
</feature>
<feature type="region of interest" description="Disordered" evidence="2">
    <location>
        <begin position="1"/>
        <end position="59"/>
    </location>
</feature>
<feature type="compositionally biased region" description="Polar residues" evidence="2">
    <location>
        <begin position="33"/>
        <end position="48"/>
    </location>
</feature>
<proteinExistence type="inferred from homology"/>
<gene>
    <name evidence="1" type="primary">sepF</name>
    <name type="ordered locus">LBUL_0678</name>
</gene>
<organism>
    <name type="scientific">Lactobacillus delbrueckii subsp. bulgaricus (strain ATCC BAA-365 / Lb-18)</name>
    <dbReference type="NCBI Taxonomy" id="321956"/>
    <lineage>
        <taxon>Bacteria</taxon>
        <taxon>Bacillati</taxon>
        <taxon>Bacillota</taxon>
        <taxon>Bacilli</taxon>
        <taxon>Lactobacillales</taxon>
        <taxon>Lactobacillaceae</taxon>
        <taxon>Lactobacillus</taxon>
    </lineage>
</organism>
<sequence length="148" mass="16753">MNNKFKDFFGFGDNDSYEERDAYEEHYDEQEEMQNSNRPTNSRDSNVVSIKAGQAGSGPSKIVLYEPRVYSDAKEVAQNLLNQRAIIINFSRMDDASARRVVDFITGTVYALNGEIQRIGDKIFLATPPKFETDGKITELLDKKDTLG</sequence>
<name>SEPF_LACDB</name>
<comment type="function">
    <text evidence="1">Cell division protein that is part of the divisome complex and is recruited early to the Z-ring. Probably stimulates Z-ring formation, perhaps through the cross-linking of FtsZ protofilaments. Its function overlaps with FtsA.</text>
</comment>
<comment type="subunit">
    <text evidence="1">Homodimer. Interacts with FtsZ.</text>
</comment>
<comment type="subcellular location">
    <subcellularLocation>
        <location evidence="1">Cytoplasm</location>
    </subcellularLocation>
    <text evidence="1">Localizes to the division site, in a FtsZ-dependent manner.</text>
</comment>
<comment type="similarity">
    <text evidence="1">Belongs to the SepF family.</text>
</comment>
<protein>
    <recommendedName>
        <fullName evidence="1">Cell division protein SepF</fullName>
    </recommendedName>
</protein>
<dbReference type="EMBL" id="CP000412">
    <property type="protein sequence ID" value="ABJ58304.1"/>
    <property type="molecule type" value="Genomic_DNA"/>
</dbReference>
<dbReference type="RefSeq" id="WP_003619179.1">
    <property type="nucleotide sequence ID" value="NC_008529.1"/>
</dbReference>
<dbReference type="SMR" id="Q04B68"/>
<dbReference type="KEGG" id="lbu:LBUL_0678"/>
<dbReference type="HOGENOM" id="CLU_078499_4_1_9"/>
<dbReference type="BioCyc" id="LDEL321956:LBUL_RS03235-MONOMER"/>
<dbReference type="GO" id="GO:0005737">
    <property type="term" value="C:cytoplasm"/>
    <property type="evidence" value="ECO:0007669"/>
    <property type="project" value="UniProtKB-SubCell"/>
</dbReference>
<dbReference type="GO" id="GO:0000917">
    <property type="term" value="P:division septum assembly"/>
    <property type="evidence" value="ECO:0007669"/>
    <property type="project" value="UniProtKB-KW"/>
</dbReference>
<dbReference type="GO" id="GO:0043093">
    <property type="term" value="P:FtsZ-dependent cytokinesis"/>
    <property type="evidence" value="ECO:0007669"/>
    <property type="project" value="UniProtKB-UniRule"/>
</dbReference>
<dbReference type="Gene3D" id="3.30.110.150">
    <property type="entry name" value="SepF-like protein"/>
    <property type="match status" value="1"/>
</dbReference>
<dbReference type="HAMAP" id="MF_01197">
    <property type="entry name" value="SepF"/>
    <property type="match status" value="1"/>
</dbReference>
<dbReference type="InterPro" id="IPR023052">
    <property type="entry name" value="Cell_div_SepF"/>
</dbReference>
<dbReference type="InterPro" id="IPR007561">
    <property type="entry name" value="Cell_div_SepF/SepF-rel"/>
</dbReference>
<dbReference type="InterPro" id="IPR038594">
    <property type="entry name" value="SepF-like_sf"/>
</dbReference>
<dbReference type="PANTHER" id="PTHR35798">
    <property type="entry name" value="CELL DIVISION PROTEIN SEPF"/>
    <property type="match status" value="1"/>
</dbReference>
<dbReference type="PANTHER" id="PTHR35798:SF1">
    <property type="entry name" value="CELL DIVISION PROTEIN SEPF"/>
    <property type="match status" value="1"/>
</dbReference>
<dbReference type="Pfam" id="PF04472">
    <property type="entry name" value="SepF"/>
    <property type="match status" value="1"/>
</dbReference>
<keyword id="KW-0131">Cell cycle</keyword>
<keyword id="KW-0132">Cell division</keyword>
<keyword id="KW-0963">Cytoplasm</keyword>
<keyword id="KW-0717">Septation</keyword>
<evidence type="ECO:0000255" key="1">
    <source>
        <dbReference type="HAMAP-Rule" id="MF_01197"/>
    </source>
</evidence>
<evidence type="ECO:0000256" key="2">
    <source>
        <dbReference type="SAM" id="MobiDB-lite"/>
    </source>
</evidence>
<accession>Q04B68</accession>